<sequence>MSNKQITAVRGTTDWFDQAMILFNAISHKIIALSDLYTFQRIKTPVFEHAELFSRNLEHSDIVKKELYQLIDRSERKLALRPEGTASIIRAVNEHKLLDQNPWPLKLYYLEPMFRYERPQKGRMREFYQYGIELVGELDQLDYLQTILFAKKILDTFNFDCVLNINWLGNFASRKCWVEQLNQYFKQYQDQLSELSVSRLDSYGVLRILDDKNESKKDFVRSAPTIDQFISLEEQTQFKQLLEQLDQLGIKYKYNSSLVRGLDYYSELVFEFILANNDQAQSTLIGGGCYQNLIAELTNKPLKAIGFALSIERFISYLDDKTKDSLINQDQKPRYLLINLVPNKELATLNLSQELINHNYQVYYQHKLNKVDKAIKYALRAKFTHLIIMGNDEWSKQTMTIKDLSSQTQQTIKYKEFIK</sequence>
<name>SYH_MYCGA</name>
<accession>Q7NBS9</accession>
<feature type="chain" id="PRO_0000136197" description="Histidine--tRNA ligase">
    <location>
        <begin position="1"/>
        <end position="419"/>
    </location>
</feature>
<reference key="1">
    <citation type="journal article" date="2003" name="Microbiology">
        <title>The complete genome sequence of the avian pathogen Mycoplasma gallisepticum strain R(low).</title>
        <authorList>
            <person name="Papazisi L."/>
            <person name="Gorton T.S."/>
            <person name="Kutish G."/>
            <person name="Markham P.F."/>
            <person name="Browning G.F."/>
            <person name="Nguyen D.K."/>
            <person name="Swartzell S."/>
            <person name="Madan A."/>
            <person name="Mahairas G."/>
            <person name="Geary S.J."/>
        </authorList>
    </citation>
    <scope>NUCLEOTIDE SEQUENCE [LARGE SCALE GENOMIC DNA]</scope>
    <source>
        <strain>R(low / passage 15 / clone 2)</strain>
    </source>
</reference>
<evidence type="ECO:0000255" key="1">
    <source>
        <dbReference type="HAMAP-Rule" id="MF_00127"/>
    </source>
</evidence>
<protein>
    <recommendedName>
        <fullName evidence="1">Histidine--tRNA ligase</fullName>
        <ecNumber evidence="1">6.1.1.21</ecNumber>
    </recommendedName>
    <alternativeName>
        <fullName evidence="1">Histidyl-tRNA synthetase</fullName>
        <shortName evidence="1">HisRS</shortName>
    </alternativeName>
</protein>
<gene>
    <name evidence="1" type="primary">hisS</name>
    <name type="ordered locus">MYCGA1840</name>
    <name type="ORF">MGA_0947</name>
</gene>
<proteinExistence type="inferred from homology"/>
<organism>
    <name type="scientific">Mycoplasmoides gallisepticum (strain R(low / passage 15 / clone 2))</name>
    <name type="common">Mycoplasma gallisepticum</name>
    <dbReference type="NCBI Taxonomy" id="710127"/>
    <lineage>
        <taxon>Bacteria</taxon>
        <taxon>Bacillati</taxon>
        <taxon>Mycoplasmatota</taxon>
        <taxon>Mycoplasmoidales</taxon>
        <taxon>Mycoplasmoidaceae</taxon>
        <taxon>Mycoplasmoides</taxon>
    </lineage>
</organism>
<keyword id="KW-0030">Aminoacyl-tRNA synthetase</keyword>
<keyword id="KW-0067">ATP-binding</keyword>
<keyword id="KW-0963">Cytoplasm</keyword>
<keyword id="KW-0436">Ligase</keyword>
<keyword id="KW-0547">Nucleotide-binding</keyword>
<keyword id="KW-0648">Protein biosynthesis</keyword>
<keyword id="KW-1185">Reference proteome</keyword>
<dbReference type="EC" id="6.1.1.21" evidence="1"/>
<dbReference type="EMBL" id="AE015450">
    <property type="protein sequence ID" value="AAP56534.2"/>
    <property type="molecule type" value="Genomic_DNA"/>
</dbReference>
<dbReference type="RefSeq" id="WP_011113416.1">
    <property type="nucleotide sequence ID" value="NC_004829.2"/>
</dbReference>
<dbReference type="SMR" id="Q7NBS9"/>
<dbReference type="KEGG" id="mga:MGA_0947"/>
<dbReference type="PATRIC" id="fig|233150.7.peg.201"/>
<dbReference type="HOGENOM" id="CLU_025113_1_1_14"/>
<dbReference type="OrthoDB" id="9800814at2"/>
<dbReference type="Proteomes" id="UP000001418">
    <property type="component" value="Chromosome"/>
</dbReference>
<dbReference type="GO" id="GO:0005737">
    <property type="term" value="C:cytoplasm"/>
    <property type="evidence" value="ECO:0007669"/>
    <property type="project" value="UniProtKB-SubCell"/>
</dbReference>
<dbReference type="GO" id="GO:0005524">
    <property type="term" value="F:ATP binding"/>
    <property type="evidence" value="ECO:0007669"/>
    <property type="project" value="UniProtKB-UniRule"/>
</dbReference>
<dbReference type="GO" id="GO:0004821">
    <property type="term" value="F:histidine-tRNA ligase activity"/>
    <property type="evidence" value="ECO:0007669"/>
    <property type="project" value="UniProtKB-UniRule"/>
</dbReference>
<dbReference type="GO" id="GO:0006427">
    <property type="term" value="P:histidyl-tRNA aminoacylation"/>
    <property type="evidence" value="ECO:0007669"/>
    <property type="project" value="UniProtKB-UniRule"/>
</dbReference>
<dbReference type="CDD" id="cd00773">
    <property type="entry name" value="HisRS-like_core"/>
    <property type="match status" value="1"/>
</dbReference>
<dbReference type="Gene3D" id="3.40.50.800">
    <property type="entry name" value="Anticodon-binding domain"/>
    <property type="match status" value="1"/>
</dbReference>
<dbReference type="Gene3D" id="3.30.930.10">
    <property type="entry name" value="Bira Bifunctional Protein, Domain 2"/>
    <property type="match status" value="1"/>
</dbReference>
<dbReference type="HAMAP" id="MF_00127">
    <property type="entry name" value="His_tRNA_synth"/>
    <property type="match status" value="1"/>
</dbReference>
<dbReference type="InterPro" id="IPR006195">
    <property type="entry name" value="aa-tRNA-synth_II"/>
</dbReference>
<dbReference type="InterPro" id="IPR045864">
    <property type="entry name" value="aa-tRNA-synth_II/BPL/LPL"/>
</dbReference>
<dbReference type="InterPro" id="IPR004154">
    <property type="entry name" value="Anticodon-bd"/>
</dbReference>
<dbReference type="InterPro" id="IPR036621">
    <property type="entry name" value="Anticodon-bd_dom_sf"/>
</dbReference>
<dbReference type="InterPro" id="IPR015807">
    <property type="entry name" value="His-tRNA-ligase"/>
</dbReference>
<dbReference type="InterPro" id="IPR041715">
    <property type="entry name" value="HisRS-like_core"/>
</dbReference>
<dbReference type="InterPro" id="IPR004516">
    <property type="entry name" value="HisRS/HisZ"/>
</dbReference>
<dbReference type="NCBIfam" id="TIGR00442">
    <property type="entry name" value="hisS"/>
    <property type="match status" value="1"/>
</dbReference>
<dbReference type="PANTHER" id="PTHR43707:SF1">
    <property type="entry name" value="HISTIDINE--TRNA LIGASE, MITOCHONDRIAL-RELATED"/>
    <property type="match status" value="1"/>
</dbReference>
<dbReference type="PANTHER" id="PTHR43707">
    <property type="entry name" value="HISTIDYL-TRNA SYNTHETASE"/>
    <property type="match status" value="1"/>
</dbReference>
<dbReference type="Pfam" id="PF03129">
    <property type="entry name" value="HGTP_anticodon"/>
    <property type="match status" value="1"/>
</dbReference>
<dbReference type="Pfam" id="PF13393">
    <property type="entry name" value="tRNA-synt_His"/>
    <property type="match status" value="1"/>
</dbReference>
<dbReference type="PIRSF" id="PIRSF001549">
    <property type="entry name" value="His-tRNA_synth"/>
    <property type="match status" value="1"/>
</dbReference>
<dbReference type="SUPFAM" id="SSF52954">
    <property type="entry name" value="Class II aaRS ABD-related"/>
    <property type="match status" value="1"/>
</dbReference>
<dbReference type="SUPFAM" id="SSF55681">
    <property type="entry name" value="Class II aaRS and biotin synthetases"/>
    <property type="match status" value="1"/>
</dbReference>
<dbReference type="PROSITE" id="PS50862">
    <property type="entry name" value="AA_TRNA_LIGASE_II"/>
    <property type="match status" value="1"/>
</dbReference>
<comment type="catalytic activity">
    <reaction evidence="1">
        <text>tRNA(His) + L-histidine + ATP = L-histidyl-tRNA(His) + AMP + diphosphate + H(+)</text>
        <dbReference type="Rhea" id="RHEA:17313"/>
        <dbReference type="Rhea" id="RHEA-COMP:9665"/>
        <dbReference type="Rhea" id="RHEA-COMP:9689"/>
        <dbReference type="ChEBI" id="CHEBI:15378"/>
        <dbReference type="ChEBI" id="CHEBI:30616"/>
        <dbReference type="ChEBI" id="CHEBI:33019"/>
        <dbReference type="ChEBI" id="CHEBI:57595"/>
        <dbReference type="ChEBI" id="CHEBI:78442"/>
        <dbReference type="ChEBI" id="CHEBI:78527"/>
        <dbReference type="ChEBI" id="CHEBI:456215"/>
        <dbReference type="EC" id="6.1.1.21"/>
    </reaction>
</comment>
<comment type="subunit">
    <text evidence="1">Homodimer.</text>
</comment>
<comment type="subcellular location">
    <subcellularLocation>
        <location evidence="1">Cytoplasm</location>
    </subcellularLocation>
</comment>
<comment type="similarity">
    <text evidence="1">Belongs to the class-II aminoacyl-tRNA synthetase family.</text>
</comment>